<reference key="1">
    <citation type="journal article" date="1998" name="Nature">
        <title>Deciphering the biology of Mycobacterium tuberculosis from the complete genome sequence.</title>
        <authorList>
            <person name="Cole S.T."/>
            <person name="Brosch R."/>
            <person name="Parkhill J."/>
            <person name="Garnier T."/>
            <person name="Churcher C.M."/>
            <person name="Harris D.E."/>
            <person name="Gordon S.V."/>
            <person name="Eiglmeier K."/>
            <person name="Gas S."/>
            <person name="Barry C.E. III"/>
            <person name="Tekaia F."/>
            <person name="Badcock K."/>
            <person name="Basham D."/>
            <person name="Brown D."/>
            <person name="Chillingworth T."/>
            <person name="Connor R."/>
            <person name="Davies R.M."/>
            <person name="Devlin K."/>
            <person name="Feltwell T."/>
            <person name="Gentles S."/>
            <person name="Hamlin N."/>
            <person name="Holroyd S."/>
            <person name="Hornsby T."/>
            <person name="Jagels K."/>
            <person name="Krogh A."/>
            <person name="McLean J."/>
            <person name="Moule S."/>
            <person name="Murphy L.D."/>
            <person name="Oliver S."/>
            <person name="Osborne J."/>
            <person name="Quail M.A."/>
            <person name="Rajandream M.A."/>
            <person name="Rogers J."/>
            <person name="Rutter S."/>
            <person name="Seeger K."/>
            <person name="Skelton S."/>
            <person name="Squares S."/>
            <person name="Squares R."/>
            <person name="Sulston J.E."/>
            <person name="Taylor K."/>
            <person name="Whitehead S."/>
            <person name="Barrell B.G."/>
        </authorList>
    </citation>
    <scope>NUCLEOTIDE SEQUENCE [LARGE SCALE GENOMIC DNA]</scope>
    <source>
        <strain>ATCC 25618 / H37Rv</strain>
    </source>
</reference>
<reference key="2">
    <citation type="journal article" date="2008" name="BMC Syst. Biol.">
        <title>targetTB: a target identification pipeline for Mycobacterium tuberculosis through an interactome, reactome and genome-scale structural analysis.</title>
        <authorList>
            <person name="Raman K."/>
            <person name="Yeturu K."/>
            <person name="Chandra N."/>
        </authorList>
    </citation>
    <scope>IDENTIFICATION AS A DRUG TARGET [LARGE SCALE ANALYSIS]</scope>
</reference>
<reference key="3">
    <citation type="journal article" date="2011" name="Microbiology">
        <title>Identification of novel diphenyl urea inhibitors of Mt-GuaB2 active against Mycobacterium tuberculosis.</title>
        <authorList>
            <person name="Usha V."/>
            <person name="Gurcha S.S."/>
            <person name="Lovering A.L."/>
            <person name="Lloyd A.J."/>
            <person name="Papaemmanouil A."/>
            <person name="Reynolds R.C."/>
            <person name="Besra G.S."/>
        </authorList>
    </citation>
    <scope>LACK OF IMP DEHYDROGENASE ACTIVITY</scope>
    <scope>FUNCTION</scope>
    <source>
        <strain>ATCC 25618 / H37Rv</strain>
    </source>
</reference>
<reference key="4">
    <citation type="journal article" date="2011" name="Mol. Cell. Proteomics">
        <title>Proteogenomic analysis of Mycobacterium tuberculosis by high resolution mass spectrometry.</title>
        <authorList>
            <person name="Kelkar D.S."/>
            <person name="Kumar D."/>
            <person name="Kumar P."/>
            <person name="Balakrishnan L."/>
            <person name="Muthusamy B."/>
            <person name="Yadav A.K."/>
            <person name="Shrivastava P."/>
            <person name="Marimuthu A."/>
            <person name="Anand S."/>
            <person name="Sundaram H."/>
            <person name="Kingsbury R."/>
            <person name="Harsha H.C."/>
            <person name="Nair B."/>
            <person name="Prasad T.S."/>
            <person name="Chauhan D.S."/>
            <person name="Katoch K."/>
            <person name="Katoch V.M."/>
            <person name="Kumar P."/>
            <person name="Chaerkady R."/>
            <person name="Ramachandran S."/>
            <person name="Dash D."/>
            <person name="Pandey A."/>
        </authorList>
    </citation>
    <scope>IDENTIFICATION BY MASS SPECTROMETRY [LARGE SCALE ANALYSIS]</scope>
    <source>
        <strain>ATCC 25618 / H37Rv</strain>
    </source>
</reference>
<feature type="chain" id="PRO_0000093782" description="Uncharacterized oxidoreductase Rv3410c">
    <location>
        <begin position="1"/>
        <end position="375"/>
    </location>
</feature>
<organism>
    <name type="scientific">Mycobacterium tuberculosis (strain ATCC 25618 / H37Rv)</name>
    <dbReference type="NCBI Taxonomy" id="83332"/>
    <lineage>
        <taxon>Bacteria</taxon>
        <taxon>Bacillati</taxon>
        <taxon>Actinomycetota</taxon>
        <taxon>Actinomycetes</taxon>
        <taxon>Mycobacteriales</taxon>
        <taxon>Mycobacteriaceae</taxon>
        <taxon>Mycobacterium</taxon>
        <taxon>Mycobacterium tuberculosis complex</taxon>
    </lineage>
</organism>
<comment type="function">
    <text evidence="1">Has no inosine-5'-monophosphate dehydrogenase activity.</text>
</comment>
<comment type="miscellaneous">
    <text>Was identified as a high-confidence drug target.</text>
</comment>
<comment type="similarity">
    <text evidence="2">Belongs to the IMPDH/GMPR family.</text>
</comment>
<evidence type="ECO:0000269" key="1">
    <source>
    </source>
</evidence>
<evidence type="ECO:0000305" key="2"/>
<proteinExistence type="evidence at protein level"/>
<accession>P9WKI5</accession>
<accession>L0TE22</accession>
<accession>P65170</accession>
<accession>Q50716</accession>
<gene>
    <name type="primary">guaB3</name>
    <name type="ordered locus">Rv3410c</name>
    <name type="ORF">MTCY78.18</name>
</gene>
<dbReference type="EC" id="1.-.-.-"/>
<dbReference type="EMBL" id="AL123456">
    <property type="protein sequence ID" value="CCP46232.1"/>
    <property type="molecule type" value="Genomic_DNA"/>
</dbReference>
<dbReference type="PIR" id="G70736">
    <property type="entry name" value="G70736"/>
</dbReference>
<dbReference type="RefSeq" id="NP_217927.1">
    <property type="nucleotide sequence ID" value="NC_000962.3"/>
</dbReference>
<dbReference type="RefSeq" id="WP_003418005.1">
    <property type="nucleotide sequence ID" value="NZ_NVQJ01000027.1"/>
</dbReference>
<dbReference type="SMR" id="P9WKI5"/>
<dbReference type="FunCoup" id="P9WKI5">
    <property type="interactions" value="39"/>
</dbReference>
<dbReference type="STRING" id="83332.Rv3410c"/>
<dbReference type="PaxDb" id="83332-Rv3410c"/>
<dbReference type="GeneID" id="887510"/>
<dbReference type="KEGG" id="mtu:Rv3410c"/>
<dbReference type="KEGG" id="mtv:RVBD_3410c"/>
<dbReference type="TubercuList" id="Rv3410c"/>
<dbReference type="eggNOG" id="COG0516">
    <property type="taxonomic scope" value="Bacteria"/>
</dbReference>
<dbReference type="InParanoid" id="P9WKI5"/>
<dbReference type="OrthoDB" id="9805398at2"/>
<dbReference type="PhylomeDB" id="P9WKI5"/>
<dbReference type="Proteomes" id="UP000001584">
    <property type="component" value="Chromosome"/>
</dbReference>
<dbReference type="GO" id="GO:0005886">
    <property type="term" value="C:plasma membrane"/>
    <property type="evidence" value="ECO:0007005"/>
    <property type="project" value="MTBBASE"/>
</dbReference>
<dbReference type="GO" id="GO:0016491">
    <property type="term" value="F:oxidoreductase activity"/>
    <property type="evidence" value="ECO:0007669"/>
    <property type="project" value="UniProtKB-KW"/>
</dbReference>
<dbReference type="GO" id="GO:0006183">
    <property type="term" value="P:GTP biosynthetic process"/>
    <property type="evidence" value="ECO:0000318"/>
    <property type="project" value="GO_Central"/>
</dbReference>
<dbReference type="FunFam" id="3.20.20.70:FF:000060">
    <property type="entry name" value="IMP dehydrogenase subunit"/>
    <property type="match status" value="1"/>
</dbReference>
<dbReference type="Gene3D" id="3.20.20.70">
    <property type="entry name" value="Aldolase class I"/>
    <property type="match status" value="1"/>
</dbReference>
<dbReference type="InterPro" id="IPR013785">
    <property type="entry name" value="Aldolase_TIM"/>
</dbReference>
<dbReference type="InterPro" id="IPR005990">
    <property type="entry name" value="IMP_DH"/>
</dbReference>
<dbReference type="InterPro" id="IPR005992">
    <property type="entry name" value="IMP_DH-rel2"/>
</dbReference>
<dbReference type="InterPro" id="IPR001093">
    <property type="entry name" value="IMP_DH_GMPRt"/>
</dbReference>
<dbReference type="NCBIfam" id="TIGR01304">
    <property type="entry name" value="IMP_DH_rel_2"/>
    <property type="match status" value="1"/>
</dbReference>
<dbReference type="PANTHER" id="PTHR11911:SF111">
    <property type="entry name" value="INOSINE-5'-MONOPHOSPHATE DEHYDROGENASE"/>
    <property type="match status" value="1"/>
</dbReference>
<dbReference type="PANTHER" id="PTHR11911">
    <property type="entry name" value="INOSINE-5-MONOPHOSPHATE DEHYDROGENASE RELATED"/>
    <property type="match status" value="1"/>
</dbReference>
<dbReference type="Pfam" id="PF00478">
    <property type="entry name" value="IMPDH"/>
    <property type="match status" value="1"/>
</dbReference>
<dbReference type="SMART" id="SM01240">
    <property type="entry name" value="IMPDH"/>
    <property type="match status" value="1"/>
</dbReference>
<dbReference type="SUPFAM" id="SSF51412">
    <property type="entry name" value="Inosine monophosphate dehydrogenase (IMPDH)"/>
    <property type="match status" value="1"/>
</dbReference>
<sequence>MVEIGMGRTARRTYELSEISIVPSRRTRSSKDVSTAWQLDAYRFEIPVVAHPTDALVSPEFAIELGRLGGLGVLNGEGLIGRHLDVEAKIAQLLEAAAADPEPSTAIRLLQELHAAPLNPDLLGAAVARIREAGVTTAVRVSPQNAQWLTPVLVAAGIDLLVIQGTIVSAERVASDGEPLNLKTFISELDIPVVAGGVLDHRTALHLMRTGAAGVIVGYGSTQGVTTTDEVLGISVPMATAIADAAAARRDYLDETGGRYVHVLADGDIHTSGELAKAIACGADAVVLGTPLAESAEALGEGWFWPAAAAHPSLPRGALLQIAVGERPPLARVLGGPSDDPFGGLNLVGGLRRSMAKAGYCDLKEFQKVGLTVGG</sequence>
<keyword id="KW-0520">NAD</keyword>
<keyword id="KW-0560">Oxidoreductase</keyword>
<keyword id="KW-1185">Reference proteome</keyword>
<protein>
    <recommendedName>
        <fullName>Uncharacterized oxidoreductase Rv3410c</fullName>
        <ecNumber>1.-.-.-</ecNumber>
    </recommendedName>
</protein>
<name>Y3410_MYCTU</name>